<gene>
    <name type="primary">Gnai3</name>
</gene>
<name>GNAI3_MOUSE</name>
<keyword id="KW-0002">3D-structure</keyword>
<keyword id="KW-0131">Cell cycle</keyword>
<keyword id="KW-0132">Cell division</keyword>
<keyword id="KW-1003">Cell membrane</keyword>
<keyword id="KW-0963">Cytoplasm</keyword>
<keyword id="KW-0206">Cytoskeleton</keyword>
<keyword id="KW-0903">Direct protein sequencing</keyword>
<keyword id="KW-0342">GTP-binding</keyword>
<keyword id="KW-0449">Lipoprotein</keyword>
<keyword id="KW-0460">Magnesium</keyword>
<keyword id="KW-0472">Membrane</keyword>
<keyword id="KW-0479">Metal-binding</keyword>
<keyword id="KW-0519">Myristate</keyword>
<keyword id="KW-0547">Nucleotide-binding</keyword>
<keyword id="KW-0564">Palmitate</keyword>
<keyword id="KW-1185">Reference proteome</keyword>
<keyword id="KW-0807">Transducer</keyword>
<reference key="1">
    <citation type="journal article" date="2005" name="Science">
        <title>The transcriptional landscape of the mammalian genome.</title>
        <authorList>
            <person name="Carninci P."/>
            <person name="Kasukawa T."/>
            <person name="Katayama S."/>
            <person name="Gough J."/>
            <person name="Frith M.C."/>
            <person name="Maeda N."/>
            <person name="Oyama R."/>
            <person name="Ravasi T."/>
            <person name="Lenhard B."/>
            <person name="Wells C."/>
            <person name="Kodzius R."/>
            <person name="Shimokawa K."/>
            <person name="Bajic V.B."/>
            <person name="Brenner S.E."/>
            <person name="Batalov S."/>
            <person name="Forrest A.R."/>
            <person name="Zavolan M."/>
            <person name="Davis M.J."/>
            <person name="Wilming L.G."/>
            <person name="Aidinis V."/>
            <person name="Allen J.E."/>
            <person name="Ambesi-Impiombato A."/>
            <person name="Apweiler R."/>
            <person name="Aturaliya R.N."/>
            <person name="Bailey T.L."/>
            <person name="Bansal M."/>
            <person name="Baxter L."/>
            <person name="Beisel K.W."/>
            <person name="Bersano T."/>
            <person name="Bono H."/>
            <person name="Chalk A.M."/>
            <person name="Chiu K.P."/>
            <person name="Choudhary V."/>
            <person name="Christoffels A."/>
            <person name="Clutterbuck D.R."/>
            <person name="Crowe M.L."/>
            <person name="Dalla E."/>
            <person name="Dalrymple B.P."/>
            <person name="de Bono B."/>
            <person name="Della Gatta G."/>
            <person name="di Bernardo D."/>
            <person name="Down T."/>
            <person name="Engstrom P."/>
            <person name="Fagiolini M."/>
            <person name="Faulkner G."/>
            <person name="Fletcher C.F."/>
            <person name="Fukushima T."/>
            <person name="Furuno M."/>
            <person name="Futaki S."/>
            <person name="Gariboldi M."/>
            <person name="Georgii-Hemming P."/>
            <person name="Gingeras T.R."/>
            <person name="Gojobori T."/>
            <person name="Green R.E."/>
            <person name="Gustincich S."/>
            <person name="Harbers M."/>
            <person name="Hayashi Y."/>
            <person name="Hensch T.K."/>
            <person name="Hirokawa N."/>
            <person name="Hill D."/>
            <person name="Huminiecki L."/>
            <person name="Iacono M."/>
            <person name="Ikeo K."/>
            <person name="Iwama A."/>
            <person name="Ishikawa T."/>
            <person name="Jakt M."/>
            <person name="Kanapin A."/>
            <person name="Katoh M."/>
            <person name="Kawasawa Y."/>
            <person name="Kelso J."/>
            <person name="Kitamura H."/>
            <person name="Kitano H."/>
            <person name="Kollias G."/>
            <person name="Krishnan S.P."/>
            <person name="Kruger A."/>
            <person name="Kummerfeld S.K."/>
            <person name="Kurochkin I.V."/>
            <person name="Lareau L.F."/>
            <person name="Lazarevic D."/>
            <person name="Lipovich L."/>
            <person name="Liu J."/>
            <person name="Liuni S."/>
            <person name="McWilliam S."/>
            <person name="Madan Babu M."/>
            <person name="Madera M."/>
            <person name="Marchionni L."/>
            <person name="Matsuda H."/>
            <person name="Matsuzawa S."/>
            <person name="Miki H."/>
            <person name="Mignone F."/>
            <person name="Miyake S."/>
            <person name="Morris K."/>
            <person name="Mottagui-Tabar S."/>
            <person name="Mulder N."/>
            <person name="Nakano N."/>
            <person name="Nakauchi H."/>
            <person name="Ng P."/>
            <person name="Nilsson R."/>
            <person name="Nishiguchi S."/>
            <person name="Nishikawa S."/>
            <person name="Nori F."/>
            <person name="Ohara O."/>
            <person name="Okazaki Y."/>
            <person name="Orlando V."/>
            <person name="Pang K.C."/>
            <person name="Pavan W.J."/>
            <person name="Pavesi G."/>
            <person name="Pesole G."/>
            <person name="Petrovsky N."/>
            <person name="Piazza S."/>
            <person name="Reed J."/>
            <person name="Reid J.F."/>
            <person name="Ring B.Z."/>
            <person name="Ringwald M."/>
            <person name="Rost B."/>
            <person name="Ruan Y."/>
            <person name="Salzberg S.L."/>
            <person name="Sandelin A."/>
            <person name="Schneider C."/>
            <person name="Schoenbach C."/>
            <person name="Sekiguchi K."/>
            <person name="Semple C.A."/>
            <person name="Seno S."/>
            <person name="Sessa L."/>
            <person name="Sheng Y."/>
            <person name="Shibata Y."/>
            <person name="Shimada H."/>
            <person name="Shimada K."/>
            <person name="Silva D."/>
            <person name="Sinclair B."/>
            <person name="Sperling S."/>
            <person name="Stupka E."/>
            <person name="Sugiura K."/>
            <person name="Sultana R."/>
            <person name="Takenaka Y."/>
            <person name="Taki K."/>
            <person name="Tammoja K."/>
            <person name="Tan S.L."/>
            <person name="Tang S."/>
            <person name="Taylor M.S."/>
            <person name="Tegner J."/>
            <person name="Teichmann S.A."/>
            <person name="Ueda H.R."/>
            <person name="van Nimwegen E."/>
            <person name="Verardo R."/>
            <person name="Wei C.L."/>
            <person name="Yagi K."/>
            <person name="Yamanishi H."/>
            <person name="Zabarovsky E."/>
            <person name="Zhu S."/>
            <person name="Zimmer A."/>
            <person name="Hide W."/>
            <person name="Bult C."/>
            <person name="Grimmond S.M."/>
            <person name="Teasdale R.D."/>
            <person name="Liu E.T."/>
            <person name="Brusic V."/>
            <person name="Quackenbush J."/>
            <person name="Wahlestedt C."/>
            <person name="Mattick J.S."/>
            <person name="Hume D.A."/>
            <person name="Kai C."/>
            <person name="Sasaki D."/>
            <person name="Tomaru Y."/>
            <person name="Fukuda S."/>
            <person name="Kanamori-Katayama M."/>
            <person name="Suzuki M."/>
            <person name="Aoki J."/>
            <person name="Arakawa T."/>
            <person name="Iida J."/>
            <person name="Imamura K."/>
            <person name="Itoh M."/>
            <person name="Kato T."/>
            <person name="Kawaji H."/>
            <person name="Kawagashira N."/>
            <person name="Kawashima T."/>
            <person name="Kojima M."/>
            <person name="Kondo S."/>
            <person name="Konno H."/>
            <person name="Nakano K."/>
            <person name="Ninomiya N."/>
            <person name="Nishio T."/>
            <person name="Okada M."/>
            <person name="Plessy C."/>
            <person name="Shibata K."/>
            <person name="Shiraki T."/>
            <person name="Suzuki S."/>
            <person name="Tagami M."/>
            <person name="Waki K."/>
            <person name="Watahiki A."/>
            <person name="Okamura-Oho Y."/>
            <person name="Suzuki H."/>
            <person name="Kawai J."/>
            <person name="Hayashizaki Y."/>
        </authorList>
    </citation>
    <scope>NUCLEOTIDE SEQUENCE [LARGE SCALE MRNA]</scope>
    <source>
        <strain>C57BL/6J</strain>
        <tissue>Heart</tissue>
        <tissue>Kidney</tissue>
        <tissue>Lung</tissue>
    </source>
</reference>
<reference key="2">
    <citation type="journal article" date="2009" name="PLoS Biol.">
        <title>Lineage-specific biology revealed by a finished genome assembly of the mouse.</title>
        <authorList>
            <person name="Church D.M."/>
            <person name="Goodstadt L."/>
            <person name="Hillier L.W."/>
            <person name="Zody M.C."/>
            <person name="Goldstein S."/>
            <person name="She X."/>
            <person name="Bult C.J."/>
            <person name="Agarwala R."/>
            <person name="Cherry J.L."/>
            <person name="DiCuccio M."/>
            <person name="Hlavina W."/>
            <person name="Kapustin Y."/>
            <person name="Meric P."/>
            <person name="Maglott D."/>
            <person name="Birtle Z."/>
            <person name="Marques A.C."/>
            <person name="Graves T."/>
            <person name="Zhou S."/>
            <person name="Teague B."/>
            <person name="Potamousis K."/>
            <person name="Churas C."/>
            <person name="Place M."/>
            <person name="Herschleb J."/>
            <person name="Runnheim R."/>
            <person name="Forrest D."/>
            <person name="Amos-Landgraf J."/>
            <person name="Schwartz D.C."/>
            <person name="Cheng Z."/>
            <person name="Lindblad-Toh K."/>
            <person name="Eichler E.E."/>
            <person name="Ponting C.P."/>
        </authorList>
    </citation>
    <scope>NUCLEOTIDE SEQUENCE [LARGE SCALE GENOMIC DNA]</scope>
    <source>
        <strain>C57BL/6J</strain>
    </source>
</reference>
<reference key="3">
    <citation type="journal article" date="2004" name="Genome Res.">
        <title>The status, quality, and expansion of the NIH full-length cDNA project: the Mammalian Gene Collection (MGC).</title>
        <authorList>
            <consortium name="The MGC Project Team"/>
        </authorList>
    </citation>
    <scope>NUCLEOTIDE SEQUENCE [LARGE SCALE MRNA]</scope>
    <source>
        <strain>FVB/N</strain>
    </source>
</reference>
<reference key="4">
    <citation type="submission" date="2007-04" db="UniProtKB">
        <authorList>
            <person name="Lubec G."/>
            <person name="Kang S.U."/>
        </authorList>
    </citation>
    <scope>PROTEIN SEQUENCE OF 36-46; 55-67; 181-192; 198-205 AND 249-257</scope>
    <scope>IDENTIFICATION BY MASS SPECTROMETRY</scope>
    <source>
        <strain>C57BL/6J</strain>
        <tissue>Brain</tissue>
    </source>
</reference>
<reference key="5">
    <citation type="journal article" date="1996" name="Mol. Reprod. Dev.">
        <title>G protein gene expression during mouse oocyte growth and maturation, and preimplantation embryo development.</title>
        <authorList>
            <person name="Williams C.J."/>
            <person name="Schultz R.M."/>
            <person name="Kopf G.S."/>
        </authorList>
    </citation>
    <scope>NUCLEOTIDE SEQUENCE [MRNA] OF 248-322</scope>
    <source>
        <strain>CF-1 / Harlan</strain>
    </source>
</reference>
<reference key="6">
    <citation type="journal article" date="2005" name="Cell">
        <title>G protein betagamma subunits and AGS3 control spindle orientation and asymmetric cell fate of cerebral cortical progenitors.</title>
        <authorList>
            <person name="Sanada K."/>
            <person name="Tsai L.-H."/>
        </authorList>
    </citation>
    <scope>INTERACTION WITH GPSM1</scope>
</reference>
<reference key="7">
    <citation type="journal article" date="2010" name="Cell">
        <title>A tissue-specific atlas of mouse protein phosphorylation and expression.</title>
        <authorList>
            <person name="Huttlin E.L."/>
            <person name="Jedrychowski M.P."/>
            <person name="Elias J.E."/>
            <person name="Goswami T."/>
            <person name="Rad R."/>
            <person name="Beausoleil S.A."/>
            <person name="Villen J."/>
            <person name="Haas W."/>
            <person name="Sowa M.E."/>
            <person name="Gygi S.P."/>
        </authorList>
    </citation>
    <scope>IDENTIFICATION BY MASS SPECTROMETRY [LARGE SCALE ANALYSIS]</scope>
    <source>
        <tissue>Brain</tissue>
        <tissue>Brown adipose tissue</tissue>
        <tissue>Heart</tissue>
        <tissue>Kidney</tissue>
        <tissue>Liver</tissue>
        <tissue>Lung</tissue>
        <tissue>Pancreas</tissue>
        <tissue>Spleen</tissue>
        <tissue>Testis</tissue>
    </source>
</reference>
<comment type="function">
    <text evidence="2 3">Heterotrimeric guanine nucleotide-binding proteins (G proteins) function as transducers downstream of G protein-coupled receptors (GPCRs) in numerous signaling cascades. The alpha chain contains the guanine nucleotide binding site and alternates between an active, GTP-bound state and an inactive, GDP-bound state. Signaling by an activated GPCR promotes GDP release and GTP binding. The alpha subunit has a low GTPase activity that converts bound GTP to GDP, thereby terminating the signal (By similarity). Both GDP release and GTP hydrolysis are modulated by numerous regulatory proteins (By similarity). Signaling is mediated via effector proteins, such as adenylate cyclase. Inhibits adenylate cyclase activity, leading to decreased intracellular cAMP levels (By similarity). Stimulates the activity of receptor-regulated K(+) channels (By similarity). The active GTP-bound form prevents the association of RGS14 with centrosomes and is required for the translocation of RGS14 from the cytoplasm to the plasma membrane. May play a role in cell division (By similarity). The active GTP-bound form activates the calcium permeant TRPC5 ion channels (By similarity).</text>
</comment>
<comment type="subunit">
    <text evidence="2 3 5">Heterotrimeric G proteins are composed of 3 units; alpha, beta and gamma. The alpha subunit contains the guanine nucleotide binding site (By similarity). GTP binding causes dissociation of the heterotrimer, liberating the individual subunits so that they can interact with downstream effector proteins. Forms a complex with CCDC88A/GIV and EGFR which leads to enhanced EGFR signaling and triggering of cell migration; ligand stimulation is required for recruitment of GNAI3 to the complex (By similarity). Interacts (inactive GDP-bound form) with CCDC88A/GIV (via GBA motif); the interaction leads to activation of GNAI3 (By similarity). Interacts (inactive GDP-bound form) with CCDC88C/DAPLE (via GBA motif); the interaction leads to activation of GNAI3 (By similarity). Interacts (inactive GDP-bound form) with NUCB1 (via GBA motif) and NUCB2 (via GBA motif); the interaction leads to activation of GNAI3 (By similarity). Interacts (inactive GDP-bound form) with PLCD4 (via GBA motif); the interaction leads to activation of GNAI3 (By similarity). Interacts with INSR; the interaction is probably mediated by CCDC88A/GIV (By similarity). Interacts with GPSM1 (PubMed:16009138). Interacts (GDP-bound form) with GPSM2 (via GoLoco domains) (By similarity). Does not interact with RGS2 (By similarity). Interacts with RGS8 and RGS10; this strongly enhances the intrinsic GTPase activity (By similarity). Interacts with RGS16; this strongly enhances the intrinsic GTPase activity (By similarity). Interacts with RGS12 (By similarity). Interacts (via active GTP- or inactive GDP-bound form) with RGS14 (By similarity). Interacts (via active GTP-bound form) with TRPC5 (via ANK repeats) in a homotetrameric ion channel; the interaction is direct and activates the channel activity (By similarity).</text>
</comment>
<comment type="interaction">
    <interactant intactId="EBI-641852">
        <id>Q9DC51</id>
    </interactant>
    <interactant intactId="EBI-641864">
        <id>P09405</id>
        <label>Ncl</label>
    </interactant>
    <organismsDiffer>false</organismsDiffer>
    <experiments>4</experiments>
</comment>
<comment type="subcellular location">
    <subcellularLocation>
        <location evidence="3">Cytoplasm</location>
    </subcellularLocation>
    <subcellularLocation>
        <location evidence="3">Cell membrane</location>
        <topology evidence="6">Lipid-anchor</topology>
    </subcellularLocation>
    <subcellularLocation>
        <location evidence="3">Cytoplasm</location>
        <location evidence="3">Cytoskeleton</location>
        <location evidence="3">Microtubule organizing center</location>
        <location evidence="3">Centrosome</location>
    </subcellularLocation>
    <text evidence="3">Localizes in the centrosomes of interphase and mitotic cells. Detected at the cleavage furrow and/or the midbody.</text>
</comment>
<comment type="similarity">
    <text evidence="6">Belongs to the G-alpha family. G(i/o/t/z) subfamily.</text>
</comment>
<accession>Q9DC51</accession>
<accession>A2AE36</accession>
<accession>Q3TGV1</accession>
<accession>Q61019</accession>
<proteinExistence type="evidence at protein level"/>
<dbReference type="EMBL" id="AK004566">
    <property type="protein sequence ID" value="BAB23377.1"/>
    <property type="molecule type" value="mRNA"/>
</dbReference>
<dbReference type="EMBL" id="AK077490">
    <property type="protein sequence ID" value="BAC36828.1"/>
    <property type="molecule type" value="mRNA"/>
</dbReference>
<dbReference type="EMBL" id="AK133749">
    <property type="protein sequence ID" value="BAE21821.1"/>
    <property type="molecule type" value="mRNA"/>
</dbReference>
<dbReference type="EMBL" id="AK168578">
    <property type="protein sequence ID" value="BAE40447.1"/>
    <property type="molecule type" value="mRNA"/>
</dbReference>
<dbReference type="EMBL" id="AK169067">
    <property type="protein sequence ID" value="BAE40854.1"/>
    <property type="molecule type" value="mRNA"/>
</dbReference>
<dbReference type="EMBL" id="AK169285">
    <property type="protein sequence ID" value="BAE41043.1"/>
    <property type="molecule type" value="mRNA"/>
</dbReference>
<dbReference type="EMBL" id="AL671854">
    <property type="status" value="NOT_ANNOTATED_CDS"/>
    <property type="molecule type" value="Genomic_DNA"/>
</dbReference>
<dbReference type="EMBL" id="BC041107">
    <property type="protein sequence ID" value="AAH41107.1"/>
    <property type="molecule type" value="mRNA"/>
</dbReference>
<dbReference type="EMBL" id="U38502">
    <property type="protein sequence ID" value="AAB01733.1"/>
    <property type="molecule type" value="mRNA"/>
</dbReference>
<dbReference type="CCDS" id="CCDS17751.1"/>
<dbReference type="RefSeq" id="NP_034436.1">
    <property type="nucleotide sequence ID" value="NM_010306.3"/>
</dbReference>
<dbReference type="PDB" id="3AB3">
    <property type="method" value="X-ray"/>
    <property type="resolution" value="2.40 A"/>
    <property type="chains" value="A/C=1-28"/>
</dbReference>
<dbReference type="PDBsum" id="3AB3"/>
<dbReference type="BMRB" id="Q9DC51"/>
<dbReference type="SMR" id="Q9DC51"/>
<dbReference type="BioGRID" id="199968">
    <property type="interactions" value="40"/>
</dbReference>
<dbReference type="CORUM" id="Q9DC51"/>
<dbReference type="DIP" id="DIP-49479N"/>
<dbReference type="FunCoup" id="Q9DC51">
    <property type="interactions" value="4498"/>
</dbReference>
<dbReference type="IntAct" id="Q9DC51">
    <property type="interactions" value="6"/>
</dbReference>
<dbReference type="MINT" id="Q9DC51"/>
<dbReference type="STRING" id="10090.ENSMUSP00000000001"/>
<dbReference type="GlyGen" id="Q9DC51">
    <property type="glycosylation" value="2 sites, 1 O-linked glycan (2 sites)"/>
</dbReference>
<dbReference type="iPTMnet" id="Q9DC51"/>
<dbReference type="PhosphoSitePlus" id="Q9DC51"/>
<dbReference type="SwissPalm" id="Q9DC51"/>
<dbReference type="jPOST" id="Q9DC51"/>
<dbReference type="PaxDb" id="10090-ENSMUSP00000000001"/>
<dbReference type="PeptideAtlas" id="Q9DC51"/>
<dbReference type="ProteomicsDB" id="271412"/>
<dbReference type="Pumba" id="Q9DC51"/>
<dbReference type="Antibodypedia" id="20068">
    <property type="antibodies" value="235 antibodies from 33 providers"/>
</dbReference>
<dbReference type="DNASU" id="14679"/>
<dbReference type="Ensembl" id="ENSMUST00000000001.5">
    <property type="protein sequence ID" value="ENSMUSP00000000001.5"/>
    <property type="gene ID" value="ENSMUSG00000000001.5"/>
</dbReference>
<dbReference type="GeneID" id="14679"/>
<dbReference type="KEGG" id="mmu:14679"/>
<dbReference type="UCSC" id="uc008qyd.2">
    <property type="organism name" value="mouse"/>
</dbReference>
<dbReference type="AGR" id="MGI:95773"/>
<dbReference type="CTD" id="2773"/>
<dbReference type="MGI" id="MGI:95773">
    <property type="gene designation" value="Gnai3"/>
</dbReference>
<dbReference type="VEuPathDB" id="HostDB:ENSMUSG00000000001"/>
<dbReference type="eggNOG" id="KOG0082">
    <property type="taxonomic scope" value="Eukaryota"/>
</dbReference>
<dbReference type="GeneTree" id="ENSGT00940000153567"/>
<dbReference type="HOGENOM" id="CLU_014184_6_0_1"/>
<dbReference type="InParanoid" id="Q9DC51"/>
<dbReference type="OMA" id="MRIIHDV"/>
<dbReference type="OrthoDB" id="5817230at2759"/>
<dbReference type="PhylomeDB" id="Q9DC51"/>
<dbReference type="TreeFam" id="TF300673"/>
<dbReference type="Reactome" id="R-MMU-170670">
    <property type="pathway name" value="Adenylate cyclase inhibitory pathway"/>
</dbReference>
<dbReference type="Reactome" id="R-MMU-392170">
    <property type="pathway name" value="ADP signalling through P2Y purinoceptor 12"/>
</dbReference>
<dbReference type="Reactome" id="R-MMU-418594">
    <property type="pathway name" value="G alpha (i) signalling events"/>
</dbReference>
<dbReference type="Reactome" id="R-MMU-9009391">
    <property type="pathway name" value="Extra-nuclear estrogen signaling"/>
</dbReference>
<dbReference type="BioGRID-ORCS" id="14679">
    <property type="hits" value="5 hits in 80 CRISPR screens"/>
</dbReference>
<dbReference type="CD-CODE" id="01CA17F3">
    <property type="entry name" value="Centrosome"/>
</dbReference>
<dbReference type="CD-CODE" id="CE726F99">
    <property type="entry name" value="Postsynaptic density"/>
</dbReference>
<dbReference type="ChiTaRS" id="Gnai3">
    <property type="organism name" value="mouse"/>
</dbReference>
<dbReference type="PRO" id="PR:Q9DC51"/>
<dbReference type="Proteomes" id="UP000000589">
    <property type="component" value="Chromosome 3"/>
</dbReference>
<dbReference type="RNAct" id="Q9DC51">
    <property type="molecule type" value="protein"/>
</dbReference>
<dbReference type="Bgee" id="ENSMUSG00000000001">
    <property type="expression patterns" value="Expressed in placenta labyrinth and 264 other cell types or tissues"/>
</dbReference>
<dbReference type="GO" id="GO:0034451">
    <property type="term" value="C:centriolar satellite"/>
    <property type="evidence" value="ECO:0007669"/>
    <property type="project" value="Ensembl"/>
</dbReference>
<dbReference type="GO" id="GO:0005813">
    <property type="term" value="C:centrosome"/>
    <property type="evidence" value="ECO:0000250"/>
    <property type="project" value="UniProtKB"/>
</dbReference>
<dbReference type="GO" id="GO:0036064">
    <property type="term" value="C:ciliary basal body"/>
    <property type="evidence" value="ECO:0007669"/>
    <property type="project" value="Ensembl"/>
</dbReference>
<dbReference type="GO" id="GO:0005737">
    <property type="term" value="C:cytoplasm"/>
    <property type="evidence" value="ECO:0000314"/>
    <property type="project" value="MGI"/>
</dbReference>
<dbReference type="GO" id="GO:0005829">
    <property type="term" value="C:cytosol"/>
    <property type="evidence" value="ECO:0007669"/>
    <property type="project" value="Ensembl"/>
</dbReference>
<dbReference type="GO" id="GO:0005789">
    <property type="term" value="C:endoplasmic reticulum membrane"/>
    <property type="evidence" value="ECO:0007669"/>
    <property type="project" value="Ensembl"/>
</dbReference>
<dbReference type="GO" id="GO:0005794">
    <property type="term" value="C:Golgi apparatus"/>
    <property type="evidence" value="ECO:0000314"/>
    <property type="project" value="MGI"/>
</dbReference>
<dbReference type="GO" id="GO:0000139">
    <property type="term" value="C:Golgi membrane"/>
    <property type="evidence" value="ECO:0007669"/>
    <property type="project" value="Ensembl"/>
</dbReference>
<dbReference type="GO" id="GO:0005834">
    <property type="term" value="C:heterotrimeric G-protein complex"/>
    <property type="evidence" value="ECO:0000304"/>
    <property type="project" value="MGI"/>
</dbReference>
<dbReference type="GO" id="GO:0030496">
    <property type="term" value="C:midbody"/>
    <property type="evidence" value="ECO:0000250"/>
    <property type="project" value="UniProtKB"/>
</dbReference>
<dbReference type="GO" id="GO:0005730">
    <property type="term" value="C:nucleolus"/>
    <property type="evidence" value="ECO:0007669"/>
    <property type="project" value="Ensembl"/>
</dbReference>
<dbReference type="GO" id="GO:0005654">
    <property type="term" value="C:nucleoplasm"/>
    <property type="evidence" value="ECO:0007669"/>
    <property type="project" value="Ensembl"/>
</dbReference>
<dbReference type="GO" id="GO:0005886">
    <property type="term" value="C:plasma membrane"/>
    <property type="evidence" value="ECO:0000250"/>
    <property type="project" value="UniProtKB"/>
</dbReference>
<dbReference type="GO" id="GO:0031683">
    <property type="term" value="F:G-protein beta/gamma-subunit complex binding"/>
    <property type="evidence" value="ECO:0007669"/>
    <property type="project" value="InterPro"/>
</dbReference>
<dbReference type="GO" id="GO:0019003">
    <property type="term" value="F:GDP binding"/>
    <property type="evidence" value="ECO:0000250"/>
    <property type="project" value="UniProtKB"/>
</dbReference>
<dbReference type="GO" id="GO:0005525">
    <property type="term" value="F:GTP binding"/>
    <property type="evidence" value="ECO:0007669"/>
    <property type="project" value="UniProtKB-KW"/>
</dbReference>
<dbReference type="GO" id="GO:0003924">
    <property type="term" value="F:GTPase activity"/>
    <property type="evidence" value="ECO:0000250"/>
    <property type="project" value="UniProtKB"/>
</dbReference>
<dbReference type="GO" id="GO:0046872">
    <property type="term" value="F:metal ion binding"/>
    <property type="evidence" value="ECO:0007669"/>
    <property type="project" value="UniProtKB-KW"/>
</dbReference>
<dbReference type="GO" id="GO:0007193">
    <property type="term" value="P:adenylate cyclase-inhibiting G protein-coupled receptor signaling pathway"/>
    <property type="evidence" value="ECO:0000250"/>
    <property type="project" value="UniProtKB"/>
</dbReference>
<dbReference type="GO" id="GO:0051301">
    <property type="term" value="P:cell division"/>
    <property type="evidence" value="ECO:0000250"/>
    <property type="project" value="UniProtKB"/>
</dbReference>
<dbReference type="GO" id="GO:0007186">
    <property type="term" value="P:G protein-coupled receptor signaling pathway"/>
    <property type="evidence" value="ECO:0000304"/>
    <property type="project" value="MGI"/>
</dbReference>
<dbReference type="GO" id="GO:0046039">
    <property type="term" value="P:GTP metabolic process"/>
    <property type="evidence" value="ECO:0000250"/>
    <property type="project" value="UniProtKB"/>
</dbReference>
<dbReference type="GO" id="GO:0016239">
    <property type="term" value="P:positive regulation of macroautophagy"/>
    <property type="evidence" value="ECO:0007669"/>
    <property type="project" value="Ensembl"/>
</dbReference>
<dbReference type="CDD" id="cd00066">
    <property type="entry name" value="G-alpha"/>
    <property type="match status" value="1"/>
</dbReference>
<dbReference type="FunFam" id="1.10.400.10:FF:000001">
    <property type="entry name" value="Guanine nucleotide-binding protein G(I) subunit alpha"/>
    <property type="match status" value="1"/>
</dbReference>
<dbReference type="FunFam" id="3.40.50.300:FF:002487">
    <property type="entry name" value="Guanine nucleotide-binding protein G(i) subunit alpha-1"/>
    <property type="match status" value="1"/>
</dbReference>
<dbReference type="FunFam" id="3.40.50.300:FF:003559">
    <property type="entry name" value="Guanine nucleotide-binding protein G(i) subunit alpha-1"/>
    <property type="match status" value="1"/>
</dbReference>
<dbReference type="Gene3D" id="1.10.400.10">
    <property type="entry name" value="GI Alpha 1, domain 2-like"/>
    <property type="match status" value="1"/>
</dbReference>
<dbReference type="Gene3D" id="3.40.50.300">
    <property type="entry name" value="P-loop containing nucleotide triphosphate hydrolases"/>
    <property type="match status" value="1"/>
</dbReference>
<dbReference type="InterPro" id="IPR001408">
    <property type="entry name" value="Gprotein_alpha_I"/>
</dbReference>
<dbReference type="InterPro" id="IPR001019">
    <property type="entry name" value="Gprotein_alpha_su"/>
</dbReference>
<dbReference type="InterPro" id="IPR011025">
    <property type="entry name" value="GproteinA_insert"/>
</dbReference>
<dbReference type="InterPro" id="IPR027417">
    <property type="entry name" value="P-loop_NTPase"/>
</dbReference>
<dbReference type="PANTHER" id="PTHR10218">
    <property type="entry name" value="GTP-BINDING PROTEIN ALPHA SUBUNIT"/>
    <property type="match status" value="1"/>
</dbReference>
<dbReference type="PANTHER" id="PTHR10218:SF230">
    <property type="entry name" value="GUANINE NUCLEOTIDE-BINDING PROTEIN G(I) SUBUNIT ALPHA-3"/>
    <property type="match status" value="1"/>
</dbReference>
<dbReference type="Pfam" id="PF00503">
    <property type="entry name" value="G-alpha"/>
    <property type="match status" value="1"/>
</dbReference>
<dbReference type="PRINTS" id="PR00318">
    <property type="entry name" value="GPROTEINA"/>
</dbReference>
<dbReference type="PRINTS" id="PR00441">
    <property type="entry name" value="GPROTEINAI"/>
</dbReference>
<dbReference type="SMART" id="SM00275">
    <property type="entry name" value="G_alpha"/>
    <property type="match status" value="1"/>
</dbReference>
<dbReference type="SUPFAM" id="SSF52540">
    <property type="entry name" value="P-loop containing nucleoside triphosphate hydrolases"/>
    <property type="match status" value="1"/>
</dbReference>
<dbReference type="SUPFAM" id="SSF47895">
    <property type="entry name" value="Transducin (alpha subunit), insertion domain"/>
    <property type="match status" value="1"/>
</dbReference>
<dbReference type="PROSITE" id="PS51882">
    <property type="entry name" value="G_ALPHA"/>
    <property type="match status" value="1"/>
</dbReference>
<organism>
    <name type="scientific">Mus musculus</name>
    <name type="common">Mouse</name>
    <dbReference type="NCBI Taxonomy" id="10090"/>
    <lineage>
        <taxon>Eukaryota</taxon>
        <taxon>Metazoa</taxon>
        <taxon>Chordata</taxon>
        <taxon>Craniata</taxon>
        <taxon>Vertebrata</taxon>
        <taxon>Euteleostomi</taxon>
        <taxon>Mammalia</taxon>
        <taxon>Eutheria</taxon>
        <taxon>Euarchontoglires</taxon>
        <taxon>Glires</taxon>
        <taxon>Rodentia</taxon>
        <taxon>Myomorpha</taxon>
        <taxon>Muroidea</taxon>
        <taxon>Muridae</taxon>
        <taxon>Murinae</taxon>
        <taxon>Mus</taxon>
        <taxon>Mus</taxon>
    </lineage>
</organism>
<feature type="initiator methionine" description="Removed" evidence="3">
    <location>
        <position position="1"/>
    </location>
</feature>
<feature type="chain" id="PRO_0000203693" description="Guanine nucleotide-binding protein G(i) subunit alpha-3">
    <location>
        <begin position="2"/>
        <end position="354"/>
    </location>
</feature>
<feature type="domain" description="G-alpha" evidence="4">
    <location>
        <begin position="32"/>
        <end position="354"/>
    </location>
</feature>
<feature type="region of interest" description="G1 motif" evidence="4">
    <location>
        <begin position="35"/>
        <end position="48"/>
    </location>
</feature>
<feature type="region of interest" description="G2 motif" evidence="4">
    <location>
        <begin position="173"/>
        <end position="181"/>
    </location>
</feature>
<feature type="region of interest" description="G3 motif" evidence="4">
    <location>
        <begin position="196"/>
        <end position="205"/>
    </location>
</feature>
<feature type="region of interest" description="G4 motif" evidence="4">
    <location>
        <begin position="265"/>
        <end position="272"/>
    </location>
</feature>
<feature type="region of interest" description="G5 motif" evidence="4">
    <location>
        <begin position="324"/>
        <end position="329"/>
    </location>
</feature>
<feature type="binding site" evidence="3">
    <location>
        <position position="42"/>
    </location>
    <ligand>
        <name>GTP</name>
        <dbReference type="ChEBI" id="CHEBI:37565"/>
    </ligand>
</feature>
<feature type="binding site" evidence="3">
    <location>
        <position position="43"/>
    </location>
    <ligand>
        <name>GTP</name>
        <dbReference type="ChEBI" id="CHEBI:37565"/>
    </ligand>
</feature>
<feature type="binding site" evidence="3">
    <location>
        <position position="44"/>
    </location>
    <ligand>
        <name>GTP</name>
        <dbReference type="ChEBI" id="CHEBI:37565"/>
    </ligand>
</feature>
<feature type="binding site" evidence="3">
    <location>
        <position position="45"/>
    </location>
    <ligand>
        <name>GTP</name>
        <dbReference type="ChEBI" id="CHEBI:37565"/>
    </ligand>
</feature>
<feature type="binding site" evidence="3">
    <location>
        <position position="46"/>
    </location>
    <ligand>
        <name>GTP</name>
        <dbReference type="ChEBI" id="CHEBI:37565"/>
    </ligand>
</feature>
<feature type="binding site" evidence="3">
    <location>
        <position position="47"/>
    </location>
    <ligand>
        <name>GTP</name>
        <dbReference type="ChEBI" id="CHEBI:37565"/>
    </ligand>
</feature>
<feature type="binding site" evidence="3">
    <location>
        <position position="47"/>
    </location>
    <ligand>
        <name>Mg(2+)</name>
        <dbReference type="ChEBI" id="CHEBI:18420"/>
    </ligand>
</feature>
<feature type="binding site" evidence="3">
    <location>
        <position position="48"/>
    </location>
    <ligand>
        <name>GTP</name>
        <dbReference type="ChEBI" id="CHEBI:37565"/>
    </ligand>
</feature>
<feature type="binding site" evidence="3">
    <location>
        <position position="150"/>
    </location>
    <ligand>
        <name>GTP</name>
        <dbReference type="ChEBI" id="CHEBI:37565"/>
    </ligand>
</feature>
<feature type="binding site" evidence="3">
    <location>
        <position position="151"/>
    </location>
    <ligand>
        <name>GTP</name>
        <dbReference type="ChEBI" id="CHEBI:37565"/>
    </ligand>
</feature>
<feature type="binding site" evidence="3">
    <location>
        <position position="175"/>
    </location>
    <ligand>
        <name>GTP</name>
        <dbReference type="ChEBI" id="CHEBI:37565"/>
    </ligand>
</feature>
<feature type="binding site" evidence="3">
    <location>
        <position position="176"/>
    </location>
    <ligand>
        <name>GTP</name>
        <dbReference type="ChEBI" id="CHEBI:37565"/>
    </ligand>
</feature>
<feature type="binding site" evidence="3">
    <location>
        <position position="177"/>
    </location>
    <ligand>
        <name>GTP</name>
        <dbReference type="ChEBI" id="CHEBI:37565"/>
    </ligand>
</feature>
<feature type="binding site" evidence="3">
    <location>
        <position position="178"/>
    </location>
    <ligand>
        <name>GTP</name>
        <dbReference type="ChEBI" id="CHEBI:37565"/>
    </ligand>
</feature>
<feature type="binding site" evidence="3">
    <location>
        <position position="179"/>
    </location>
    <ligand>
        <name>GTP</name>
        <dbReference type="ChEBI" id="CHEBI:37565"/>
    </ligand>
</feature>
<feature type="binding site" evidence="3">
    <location>
        <position position="180"/>
    </location>
    <ligand>
        <name>GTP</name>
        <dbReference type="ChEBI" id="CHEBI:37565"/>
    </ligand>
</feature>
<feature type="binding site" evidence="3">
    <location>
        <position position="181"/>
    </location>
    <ligand>
        <name>GTP</name>
        <dbReference type="ChEBI" id="CHEBI:37565"/>
    </ligand>
</feature>
<feature type="binding site" evidence="3">
    <location>
        <position position="181"/>
    </location>
    <ligand>
        <name>Mg(2+)</name>
        <dbReference type="ChEBI" id="CHEBI:18420"/>
    </ligand>
</feature>
<feature type="binding site" evidence="3">
    <location>
        <position position="201"/>
    </location>
    <ligand>
        <name>GTP</name>
        <dbReference type="ChEBI" id="CHEBI:37565"/>
    </ligand>
</feature>
<feature type="binding site" evidence="3">
    <location>
        <position position="203"/>
    </location>
    <ligand>
        <name>GTP</name>
        <dbReference type="ChEBI" id="CHEBI:37565"/>
    </ligand>
</feature>
<feature type="binding site" evidence="3">
    <location>
        <position position="269"/>
    </location>
    <ligand>
        <name>GTP</name>
        <dbReference type="ChEBI" id="CHEBI:37565"/>
    </ligand>
</feature>
<feature type="binding site" evidence="3">
    <location>
        <position position="270"/>
    </location>
    <ligand>
        <name>GTP</name>
        <dbReference type="ChEBI" id="CHEBI:37565"/>
    </ligand>
</feature>
<feature type="binding site" evidence="3">
    <location>
        <position position="272"/>
    </location>
    <ligand>
        <name>GTP</name>
        <dbReference type="ChEBI" id="CHEBI:37565"/>
    </ligand>
</feature>
<feature type="binding site" evidence="3">
    <location>
        <position position="273"/>
    </location>
    <ligand>
        <name>GTP</name>
        <dbReference type="ChEBI" id="CHEBI:37565"/>
    </ligand>
</feature>
<feature type="binding site" evidence="3">
    <location>
        <position position="325"/>
    </location>
    <ligand>
        <name>GTP</name>
        <dbReference type="ChEBI" id="CHEBI:37565"/>
    </ligand>
</feature>
<feature type="binding site" evidence="3">
    <location>
        <position position="326"/>
    </location>
    <ligand>
        <name>GTP</name>
        <dbReference type="ChEBI" id="CHEBI:37565"/>
    </ligand>
</feature>
<feature type="binding site" evidence="3">
    <location>
        <position position="327"/>
    </location>
    <ligand>
        <name>GTP</name>
        <dbReference type="ChEBI" id="CHEBI:37565"/>
    </ligand>
</feature>
<feature type="lipid moiety-binding region" description="N-myristoyl glycine" evidence="3">
    <location>
        <position position="2"/>
    </location>
</feature>
<feature type="lipid moiety-binding region" description="S-palmitoyl cysteine" evidence="1">
    <location>
        <position position="3"/>
    </location>
</feature>
<evidence type="ECO:0000250" key="1"/>
<evidence type="ECO:0000250" key="2">
    <source>
        <dbReference type="UniProtKB" id="P08753"/>
    </source>
</evidence>
<evidence type="ECO:0000250" key="3">
    <source>
        <dbReference type="UniProtKB" id="P08754"/>
    </source>
</evidence>
<evidence type="ECO:0000255" key="4">
    <source>
        <dbReference type="PROSITE-ProRule" id="PRU01230"/>
    </source>
</evidence>
<evidence type="ECO:0000269" key="5">
    <source>
    </source>
</evidence>
<evidence type="ECO:0000305" key="6"/>
<sequence>MGCTLSAEDKAAVERSKMIDRNLREDGEKAAKEVKLLLLGAGESGKSTIVKQMKIIHEDGYSEDECKQYKVVVYSNTIQSIIAIIRAMGRLKIDFGESARADDARQLFVLAGSAEEGVMTSELAGVIKRLWRDGGVQACFSRSREYQLNDSASYYLNDLDRISQTNYIPTQQDVLRTRVKTTGIVETHFTFKELYFKMFDVGGQRSERKKWIHCFEGVTAIIFCVALSDYDLVLAEDEEMNRMHESMKLFDSICNNKWFTDTSIILFLNKKDLFEEKIKRSPLTICYPEYTGSNTYEEAAAYIQCQFEDLNRRKDTKEVYTHFTCATDTKNVQFVFDAVTDVIIKNNLKECGLY</sequence>
<protein>
    <recommendedName>
        <fullName>Guanine nucleotide-binding protein G(i) subunit alpha-3</fullName>
    </recommendedName>
    <alternativeName>
        <fullName>G(i) alpha-3</fullName>
    </alternativeName>
</protein>